<proteinExistence type="inferred from homology"/>
<sequence>MAKTIQAIRGMNDCAPTESPLWQWIEAQVRNVLNSYGYSEVRMPIVESTPLFARAIGEVTDVVSKEMYTFWDNDEQLTLRPEGTAGCVRAAIEHGWIYNNEQRLWYIGPMFRHERPQKGRYRQFHQVGVEVFGIANPEIDAELIMLTYRLWKALGIDQHVTLQLNSIGSLEARANYRSALVGFLENHQDLMSDEEKERLVRNPLRILDTKNPELQKVLDNAPKLLDYLDDESRTHFEQLCSLLDAVGIQYEINPKLVRGLDYYNKTVFEWVTSALGAQGTVCGGGRYDGLVEQLGGHATPSIGFAMGLERLVLLVQEVNPNVPAKSAVDIYVVYQGEGATLAAFELAEKVRSELPHLNTMLHCSSGNFKKQFKRADKSGATLALVIGESEVQNKQVVVKHLQGGTDQQTLDLVNIIDYLQTQF</sequence>
<keyword id="KW-0030">Aminoacyl-tRNA synthetase</keyword>
<keyword id="KW-0067">ATP-binding</keyword>
<keyword id="KW-0963">Cytoplasm</keyword>
<keyword id="KW-0436">Ligase</keyword>
<keyword id="KW-0547">Nucleotide-binding</keyword>
<keyword id="KW-0648">Protein biosynthesis</keyword>
<keyword id="KW-1185">Reference proteome</keyword>
<evidence type="ECO:0000250" key="1"/>
<evidence type="ECO:0000305" key="2"/>
<gene>
    <name type="primary">hisS</name>
    <name type="ordered locus">HI_0369</name>
</gene>
<protein>
    <recommendedName>
        <fullName>Histidine--tRNA ligase</fullName>
        <ecNumber>6.1.1.21</ecNumber>
    </recommendedName>
    <alternativeName>
        <fullName>Histidyl-tRNA synthetase</fullName>
        <shortName>HisRS</shortName>
    </alternativeName>
</protein>
<dbReference type="EC" id="6.1.1.21"/>
<dbReference type="EMBL" id="L42023">
    <property type="protein sequence ID" value="AAC22027.1"/>
    <property type="molecule type" value="Genomic_DNA"/>
</dbReference>
<dbReference type="PIR" id="I64063">
    <property type="entry name" value="I64063"/>
</dbReference>
<dbReference type="RefSeq" id="NP_438530.1">
    <property type="nucleotide sequence ID" value="NC_000907.1"/>
</dbReference>
<dbReference type="SMR" id="P43823"/>
<dbReference type="STRING" id="71421.HI_0369"/>
<dbReference type="EnsemblBacteria" id="AAC22027">
    <property type="protein sequence ID" value="AAC22027"/>
    <property type="gene ID" value="HI_0369"/>
</dbReference>
<dbReference type="KEGG" id="hin:HI_0369"/>
<dbReference type="PATRIC" id="fig|71421.8.peg.387"/>
<dbReference type="eggNOG" id="COG0124">
    <property type="taxonomic scope" value="Bacteria"/>
</dbReference>
<dbReference type="HOGENOM" id="CLU_025113_1_1_6"/>
<dbReference type="OrthoDB" id="9800814at2"/>
<dbReference type="PhylomeDB" id="P43823"/>
<dbReference type="BioCyc" id="HINF71421:G1GJ1-382-MONOMER"/>
<dbReference type="BRENDA" id="6.1.1.21">
    <property type="organism ID" value="2529"/>
</dbReference>
<dbReference type="Proteomes" id="UP000000579">
    <property type="component" value="Chromosome"/>
</dbReference>
<dbReference type="GO" id="GO:0005737">
    <property type="term" value="C:cytoplasm"/>
    <property type="evidence" value="ECO:0007669"/>
    <property type="project" value="UniProtKB-SubCell"/>
</dbReference>
<dbReference type="GO" id="GO:0005524">
    <property type="term" value="F:ATP binding"/>
    <property type="evidence" value="ECO:0007669"/>
    <property type="project" value="UniProtKB-UniRule"/>
</dbReference>
<dbReference type="GO" id="GO:0004821">
    <property type="term" value="F:histidine-tRNA ligase activity"/>
    <property type="evidence" value="ECO:0000318"/>
    <property type="project" value="GO_Central"/>
</dbReference>
<dbReference type="GO" id="GO:0006427">
    <property type="term" value="P:histidyl-tRNA aminoacylation"/>
    <property type="evidence" value="ECO:0000318"/>
    <property type="project" value="GO_Central"/>
</dbReference>
<dbReference type="CDD" id="cd00773">
    <property type="entry name" value="HisRS-like_core"/>
    <property type="match status" value="1"/>
</dbReference>
<dbReference type="CDD" id="cd00859">
    <property type="entry name" value="HisRS_anticodon"/>
    <property type="match status" value="1"/>
</dbReference>
<dbReference type="FunFam" id="3.30.930.10:FF:000005">
    <property type="entry name" value="Histidine--tRNA ligase"/>
    <property type="match status" value="1"/>
</dbReference>
<dbReference type="Gene3D" id="3.40.50.800">
    <property type="entry name" value="Anticodon-binding domain"/>
    <property type="match status" value="1"/>
</dbReference>
<dbReference type="Gene3D" id="3.30.930.10">
    <property type="entry name" value="Bira Bifunctional Protein, Domain 2"/>
    <property type="match status" value="1"/>
</dbReference>
<dbReference type="HAMAP" id="MF_00127">
    <property type="entry name" value="His_tRNA_synth"/>
    <property type="match status" value="1"/>
</dbReference>
<dbReference type="InterPro" id="IPR006195">
    <property type="entry name" value="aa-tRNA-synth_II"/>
</dbReference>
<dbReference type="InterPro" id="IPR045864">
    <property type="entry name" value="aa-tRNA-synth_II/BPL/LPL"/>
</dbReference>
<dbReference type="InterPro" id="IPR004154">
    <property type="entry name" value="Anticodon-bd"/>
</dbReference>
<dbReference type="InterPro" id="IPR036621">
    <property type="entry name" value="Anticodon-bd_dom_sf"/>
</dbReference>
<dbReference type="InterPro" id="IPR015807">
    <property type="entry name" value="His-tRNA-ligase"/>
</dbReference>
<dbReference type="InterPro" id="IPR041715">
    <property type="entry name" value="HisRS-like_core"/>
</dbReference>
<dbReference type="InterPro" id="IPR004516">
    <property type="entry name" value="HisRS/HisZ"/>
</dbReference>
<dbReference type="InterPro" id="IPR033656">
    <property type="entry name" value="HisRS_anticodon"/>
</dbReference>
<dbReference type="NCBIfam" id="TIGR00442">
    <property type="entry name" value="hisS"/>
    <property type="match status" value="1"/>
</dbReference>
<dbReference type="PANTHER" id="PTHR43707:SF1">
    <property type="entry name" value="HISTIDINE--TRNA LIGASE, MITOCHONDRIAL-RELATED"/>
    <property type="match status" value="1"/>
</dbReference>
<dbReference type="PANTHER" id="PTHR43707">
    <property type="entry name" value="HISTIDYL-TRNA SYNTHETASE"/>
    <property type="match status" value="1"/>
</dbReference>
<dbReference type="Pfam" id="PF03129">
    <property type="entry name" value="HGTP_anticodon"/>
    <property type="match status" value="1"/>
</dbReference>
<dbReference type="Pfam" id="PF13393">
    <property type="entry name" value="tRNA-synt_His"/>
    <property type="match status" value="1"/>
</dbReference>
<dbReference type="PIRSF" id="PIRSF001549">
    <property type="entry name" value="His-tRNA_synth"/>
    <property type="match status" value="1"/>
</dbReference>
<dbReference type="SUPFAM" id="SSF52954">
    <property type="entry name" value="Class II aaRS ABD-related"/>
    <property type="match status" value="1"/>
</dbReference>
<dbReference type="SUPFAM" id="SSF55681">
    <property type="entry name" value="Class II aaRS and biotin synthetases"/>
    <property type="match status" value="1"/>
</dbReference>
<dbReference type="PROSITE" id="PS50862">
    <property type="entry name" value="AA_TRNA_LIGASE_II"/>
    <property type="match status" value="1"/>
</dbReference>
<organism>
    <name type="scientific">Haemophilus influenzae (strain ATCC 51907 / DSM 11121 / KW20 / Rd)</name>
    <dbReference type="NCBI Taxonomy" id="71421"/>
    <lineage>
        <taxon>Bacteria</taxon>
        <taxon>Pseudomonadati</taxon>
        <taxon>Pseudomonadota</taxon>
        <taxon>Gammaproteobacteria</taxon>
        <taxon>Pasteurellales</taxon>
        <taxon>Pasteurellaceae</taxon>
        <taxon>Haemophilus</taxon>
    </lineage>
</organism>
<comment type="catalytic activity">
    <reaction>
        <text>tRNA(His) + L-histidine + ATP = L-histidyl-tRNA(His) + AMP + diphosphate + H(+)</text>
        <dbReference type="Rhea" id="RHEA:17313"/>
        <dbReference type="Rhea" id="RHEA-COMP:9665"/>
        <dbReference type="Rhea" id="RHEA-COMP:9689"/>
        <dbReference type="ChEBI" id="CHEBI:15378"/>
        <dbReference type="ChEBI" id="CHEBI:30616"/>
        <dbReference type="ChEBI" id="CHEBI:33019"/>
        <dbReference type="ChEBI" id="CHEBI:57595"/>
        <dbReference type="ChEBI" id="CHEBI:78442"/>
        <dbReference type="ChEBI" id="CHEBI:78527"/>
        <dbReference type="ChEBI" id="CHEBI:456215"/>
        <dbReference type="EC" id="6.1.1.21"/>
    </reaction>
</comment>
<comment type="subunit">
    <text evidence="1">Homodimer.</text>
</comment>
<comment type="subcellular location">
    <subcellularLocation>
        <location evidence="1">Cytoplasm</location>
    </subcellularLocation>
</comment>
<comment type="similarity">
    <text evidence="2">Belongs to the class-II aminoacyl-tRNA synthetase family.</text>
</comment>
<feature type="initiator methionine" description="Removed" evidence="1">
    <location>
        <position position="1"/>
    </location>
</feature>
<feature type="chain" id="PRO_0000136171" description="Histidine--tRNA ligase">
    <location>
        <begin position="2"/>
        <end position="423"/>
    </location>
</feature>
<name>SYH_HAEIN</name>
<reference key="1">
    <citation type="journal article" date="1995" name="Science">
        <title>Whole-genome random sequencing and assembly of Haemophilus influenzae Rd.</title>
        <authorList>
            <person name="Fleischmann R.D."/>
            <person name="Adams M.D."/>
            <person name="White O."/>
            <person name="Clayton R.A."/>
            <person name="Kirkness E.F."/>
            <person name="Kerlavage A.R."/>
            <person name="Bult C.J."/>
            <person name="Tomb J.-F."/>
            <person name="Dougherty B.A."/>
            <person name="Merrick J.M."/>
            <person name="McKenney K."/>
            <person name="Sutton G.G."/>
            <person name="FitzHugh W."/>
            <person name="Fields C.A."/>
            <person name="Gocayne J.D."/>
            <person name="Scott J.D."/>
            <person name="Shirley R."/>
            <person name="Liu L.-I."/>
            <person name="Glodek A."/>
            <person name="Kelley J.M."/>
            <person name="Weidman J.F."/>
            <person name="Phillips C.A."/>
            <person name="Spriggs T."/>
            <person name="Hedblom E."/>
            <person name="Cotton M.D."/>
            <person name="Utterback T.R."/>
            <person name="Hanna M.C."/>
            <person name="Nguyen D.T."/>
            <person name="Saudek D.M."/>
            <person name="Brandon R.C."/>
            <person name="Fine L.D."/>
            <person name="Fritchman J.L."/>
            <person name="Fuhrmann J.L."/>
            <person name="Geoghagen N.S.M."/>
            <person name="Gnehm C.L."/>
            <person name="McDonald L.A."/>
            <person name="Small K.V."/>
            <person name="Fraser C.M."/>
            <person name="Smith H.O."/>
            <person name="Venter J.C."/>
        </authorList>
    </citation>
    <scope>NUCLEOTIDE SEQUENCE [LARGE SCALE GENOMIC DNA]</scope>
    <source>
        <strain>ATCC 51907 / DSM 11121 / KW20 / Rd</strain>
    </source>
</reference>
<accession>P43823</accession>